<protein>
    <recommendedName>
        <fullName evidence="7">Glutamine synthetase</fullName>
        <shortName evidence="7">GS</shortName>
        <ecNumber evidence="2">6.3.1.2</ecNumber>
    </recommendedName>
    <alternativeName>
        <fullName evidence="2">Glutamate--ammonia ligase</fullName>
    </alternativeName>
    <alternativeName>
        <fullName evidence="2">Glutamine synthetase I alpha</fullName>
        <shortName evidence="2">GSI alpha</shortName>
    </alternativeName>
</protein>
<keyword id="KW-0067">ATP-binding</keyword>
<keyword id="KW-0963">Cytoplasm</keyword>
<keyword id="KW-0436">Ligase</keyword>
<keyword id="KW-0460">Magnesium</keyword>
<keyword id="KW-0479">Metal-binding</keyword>
<keyword id="KW-0547">Nucleotide-binding</keyword>
<proteinExistence type="inferred from homology"/>
<name>GLN1A_STAAU</name>
<evidence type="ECO:0000250" key="1">
    <source>
        <dbReference type="UniProtKB" id="P0A1P6"/>
    </source>
</evidence>
<evidence type="ECO:0000250" key="2">
    <source>
        <dbReference type="UniProtKB" id="P12425"/>
    </source>
</evidence>
<evidence type="ECO:0000250" key="3">
    <source>
        <dbReference type="UniProtKB" id="P77961"/>
    </source>
</evidence>
<evidence type="ECO:0000250" key="4">
    <source>
        <dbReference type="UniProtKB" id="P9WN39"/>
    </source>
</evidence>
<evidence type="ECO:0000255" key="5">
    <source>
        <dbReference type="PROSITE-ProRule" id="PRU01330"/>
    </source>
</evidence>
<evidence type="ECO:0000255" key="6">
    <source>
        <dbReference type="PROSITE-ProRule" id="PRU01331"/>
    </source>
</evidence>
<evidence type="ECO:0000303" key="7">
    <source>
    </source>
</evidence>
<evidence type="ECO:0000305" key="8"/>
<feature type="chain" id="PRO_0000153262" description="Glutamine synthetase">
    <location>
        <begin position="1"/>
        <end position="446"/>
    </location>
</feature>
<feature type="domain" description="GS beta-grasp" evidence="5">
    <location>
        <begin position="18"/>
        <end position="103"/>
    </location>
</feature>
<feature type="domain" description="GS catalytic" evidence="6">
    <location>
        <begin position="110"/>
        <end position="446"/>
    </location>
</feature>
<feature type="binding site" evidence="2">
    <location>
        <position position="134"/>
    </location>
    <ligand>
        <name>Mg(2+)</name>
        <dbReference type="ChEBI" id="CHEBI:18420"/>
        <label>1</label>
    </ligand>
</feature>
<feature type="binding site" evidence="2">
    <location>
        <position position="136"/>
    </location>
    <ligand>
        <name>Mg(2+)</name>
        <dbReference type="ChEBI" id="CHEBI:18420"/>
        <label>2</label>
    </ligand>
</feature>
<feature type="binding site" evidence="4">
    <location>
        <position position="186"/>
    </location>
    <ligand>
        <name>ATP</name>
        <dbReference type="ChEBI" id="CHEBI:30616"/>
    </ligand>
</feature>
<feature type="binding site" evidence="2">
    <location>
        <position position="191"/>
    </location>
    <ligand>
        <name>Mg(2+)</name>
        <dbReference type="ChEBI" id="CHEBI:18420"/>
        <label>2</label>
    </ligand>
</feature>
<feature type="binding site" evidence="2">
    <location>
        <position position="198"/>
    </location>
    <ligand>
        <name>Mg(2+)</name>
        <dbReference type="ChEBI" id="CHEBI:18420"/>
        <label>2</label>
    </ligand>
</feature>
<feature type="binding site" evidence="4">
    <location>
        <begin position="242"/>
        <end position="243"/>
    </location>
    <ligand>
        <name>L-glutamate</name>
        <dbReference type="ChEBI" id="CHEBI:29985"/>
    </ligand>
</feature>
<feature type="binding site" evidence="2">
    <location>
        <position position="243"/>
    </location>
    <ligand>
        <name>L-glutamate</name>
        <dbReference type="ChEBI" id="CHEBI:29985"/>
    </ligand>
</feature>
<feature type="binding site" evidence="2">
    <location>
        <position position="247"/>
    </location>
    <ligand>
        <name>Mg(2+)</name>
        <dbReference type="ChEBI" id="CHEBI:18420"/>
        <label>1</label>
    </ligand>
</feature>
<feature type="binding site" evidence="3">
    <location>
        <position position="251"/>
    </location>
    <ligand>
        <name>ATP</name>
        <dbReference type="ChEBI" id="CHEBI:30616"/>
    </ligand>
</feature>
<feature type="binding site" evidence="1">
    <location>
        <position position="300"/>
    </location>
    <ligand>
        <name>L-glutamate</name>
        <dbReference type="ChEBI" id="CHEBI:29985"/>
    </ligand>
</feature>
<feature type="binding site" evidence="1">
    <location>
        <position position="306"/>
    </location>
    <ligand>
        <name>L-glutamate</name>
        <dbReference type="ChEBI" id="CHEBI:29985"/>
    </ligand>
</feature>
<feature type="binding site" evidence="4">
    <location>
        <position position="318"/>
    </location>
    <ligand>
        <name>ATP</name>
        <dbReference type="ChEBI" id="CHEBI:30616"/>
    </ligand>
</feature>
<feature type="binding site" evidence="4">
    <location>
        <position position="318"/>
    </location>
    <ligand>
        <name>L-glutamate</name>
        <dbReference type="ChEBI" id="CHEBI:29985"/>
    </ligand>
</feature>
<feature type="binding site" evidence="4">
    <location>
        <position position="323"/>
    </location>
    <ligand>
        <name>ATP</name>
        <dbReference type="ChEBI" id="CHEBI:30616"/>
    </ligand>
</feature>
<feature type="binding site" evidence="2">
    <location>
        <position position="335"/>
    </location>
    <ligand>
        <name>Mg(2+)</name>
        <dbReference type="ChEBI" id="CHEBI:18420"/>
        <label>1</label>
    </ligand>
</feature>
<feature type="binding site" evidence="1">
    <location>
        <position position="337"/>
    </location>
    <ligand>
        <name>L-glutamate</name>
        <dbReference type="ChEBI" id="CHEBI:29985"/>
    </ligand>
</feature>
<feature type="site" description="Important for inhibition by glutamine" evidence="2">
    <location>
        <position position="64"/>
    </location>
</feature>
<gene>
    <name evidence="7" type="primary">glnA</name>
</gene>
<reference key="1">
    <citation type="journal article" date="1996" name="Microb. Drug Resist.">
        <title>Glutamine synthetase and heteroresistance in methicillin-resistant Staphylococcus aureus.</title>
        <authorList>
            <person name="Stranden A.M."/>
            <person name="Roos M."/>
            <person name="Berger-Baechi B."/>
        </authorList>
    </citation>
    <scope>NUCLEOTIDE SEQUENCE [GENOMIC DNA]</scope>
    <source>
        <strain>BB270 / AS63</strain>
    </source>
</reference>
<comment type="function">
    <text evidence="2">Glutamine synthetase (GS) is an unusual multitasking protein that functions as an enzyme, a transcription coregulator, and a chaperone in ammonium assimilation and in the regulation of genes involved in nitrogen metabolism. It catalyzes the ATP-dependent biosynthesis of glutamine from glutamate and ammonia. Feedback-inhibited GlnA also interacts with and regulates the activity of the transcriptional regulator TnrA. During nitrogen limitation, TnrA is in its DNA-binding active state and turns on the transcription of genes required for nitrogen assimilation. Under conditions of nitrogen excess, feedback-inhibited GlnA forms a stable complex with TnrA, which inhibits its DNA-binding activity. In contrast, feedback-inhibited GlnA acts as a chaperone to stabilize the DNA-binding activity of GlnR, which represses the transcription of nitrogen assimilation genes.</text>
</comment>
<comment type="catalytic activity">
    <reaction evidence="2">
        <text>L-glutamate + NH4(+) + ATP = L-glutamine + ADP + phosphate + H(+)</text>
        <dbReference type="Rhea" id="RHEA:16169"/>
        <dbReference type="ChEBI" id="CHEBI:15378"/>
        <dbReference type="ChEBI" id="CHEBI:28938"/>
        <dbReference type="ChEBI" id="CHEBI:29985"/>
        <dbReference type="ChEBI" id="CHEBI:30616"/>
        <dbReference type="ChEBI" id="CHEBI:43474"/>
        <dbReference type="ChEBI" id="CHEBI:58359"/>
        <dbReference type="ChEBI" id="CHEBI:456216"/>
        <dbReference type="EC" id="6.3.1.2"/>
    </reaction>
</comment>
<comment type="cofactor">
    <cofactor evidence="2">
        <name>Mg(2+)</name>
        <dbReference type="ChEBI" id="CHEBI:18420"/>
    </cofactor>
    <text evidence="2">Binds 2 Mg(2+) ions per subunit.</text>
</comment>
<comment type="activity regulation">
    <text evidence="2">Inhibited by glutamine.</text>
</comment>
<comment type="subunit">
    <text evidence="2">Oligomer of 12 subunits arranged in the form of two hexagons. In its feedback-inhibited form, interacts with TnrA in order to block its DNA-binding activity.</text>
</comment>
<comment type="subcellular location">
    <subcellularLocation>
        <location evidence="2">Cytoplasm</location>
    </subcellularLocation>
</comment>
<comment type="similarity">
    <text evidence="8">Belongs to the glutamine synthetase family.</text>
</comment>
<organism>
    <name type="scientific">Staphylococcus aureus</name>
    <dbReference type="NCBI Taxonomy" id="1280"/>
    <lineage>
        <taxon>Bacteria</taxon>
        <taxon>Bacillati</taxon>
        <taxon>Bacillota</taxon>
        <taxon>Bacilli</taxon>
        <taxon>Bacillales</taxon>
        <taxon>Staphylococcaceae</taxon>
        <taxon>Staphylococcus</taxon>
    </lineage>
</organism>
<accession>P0A040</accession>
<accession>Q59812</accession>
<sequence>MPKRTFTKDDIRKFAEEENVRYLRLQFTDILGTIKNVEVPVSQLEKVLDNEMMFDGSSIEGFVRIEESDMYLHPDLDTWVIFPWTAGQGKVARLICDVYKTDGTPFEGDPRANLKRVLKEMEDLGFTDFNLGPEPEFFLFKLDEKGEPTLELNDDGGYFDLAPTDLGENCRRDIVLELEDMGFDIEASHHEVAPGQHEIDFKYADAVTACDNIQTFKLVVKTIARKHNLHATFMPKPLFGVNGSGMHFNVSLFKGKENAFFDPNTEMGLTETAYQFTAGVLKNARGFTAVCNPLVNSYKRLVPGYEAPCYIAWSGKNRSPLIRVPSSRGLSTRIEVRSVDPAANPYMALAAILEAGLDGIKNKLKVPEPVNQNIYEMNREEREAVGIQDLPSTLYTALKAMRENEVIKKALGNHIYNQFINSKSIEWDYYRTQVSEWERDQYMKQY</sequence>
<dbReference type="EC" id="6.3.1.2" evidence="2"/>
<dbReference type="EMBL" id="X76490">
    <property type="protein sequence ID" value="CAA54030.1"/>
    <property type="molecule type" value="Genomic_DNA"/>
</dbReference>
<dbReference type="PIR" id="T51803">
    <property type="entry name" value="T51803"/>
</dbReference>
<dbReference type="RefSeq" id="WP_001126603.1">
    <property type="nucleotide sequence ID" value="NZ_WWFR01000003.1"/>
</dbReference>
<dbReference type="SMR" id="P0A040"/>
<dbReference type="GeneID" id="98345625"/>
<dbReference type="OMA" id="PHPHEFE"/>
<dbReference type="OrthoDB" id="9807095at2"/>
<dbReference type="GO" id="GO:0005737">
    <property type="term" value="C:cytoplasm"/>
    <property type="evidence" value="ECO:0007669"/>
    <property type="project" value="UniProtKB-SubCell"/>
</dbReference>
<dbReference type="GO" id="GO:0005524">
    <property type="term" value="F:ATP binding"/>
    <property type="evidence" value="ECO:0007669"/>
    <property type="project" value="UniProtKB-KW"/>
</dbReference>
<dbReference type="GO" id="GO:0004356">
    <property type="term" value="F:glutamine synthetase activity"/>
    <property type="evidence" value="ECO:0007669"/>
    <property type="project" value="UniProtKB-EC"/>
</dbReference>
<dbReference type="GO" id="GO:0046872">
    <property type="term" value="F:metal ion binding"/>
    <property type="evidence" value="ECO:0007669"/>
    <property type="project" value="UniProtKB-KW"/>
</dbReference>
<dbReference type="GO" id="GO:0006542">
    <property type="term" value="P:glutamine biosynthetic process"/>
    <property type="evidence" value="ECO:0007669"/>
    <property type="project" value="InterPro"/>
</dbReference>
<dbReference type="FunFam" id="3.10.20.70:FF:000005">
    <property type="entry name" value="Glutamine synthetase"/>
    <property type="match status" value="1"/>
</dbReference>
<dbReference type="FunFam" id="3.30.590.10:FF:000003">
    <property type="entry name" value="Glutamine synthetase 2"/>
    <property type="match status" value="1"/>
</dbReference>
<dbReference type="Gene3D" id="3.10.20.70">
    <property type="entry name" value="Glutamine synthetase, N-terminal domain"/>
    <property type="match status" value="1"/>
</dbReference>
<dbReference type="Gene3D" id="3.30.590.10">
    <property type="entry name" value="Glutamine synthetase/guanido kinase, catalytic domain"/>
    <property type="match status" value="1"/>
</dbReference>
<dbReference type="InterPro" id="IPR008147">
    <property type="entry name" value="Gln_synt_N"/>
</dbReference>
<dbReference type="InterPro" id="IPR036651">
    <property type="entry name" value="Gln_synt_N_sf"/>
</dbReference>
<dbReference type="InterPro" id="IPR014746">
    <property type="entry name" value="Gln_synth/guanido_kin_cat_dom"/>
</dbReference>
<dbReference type="InterPro" id="IPR008146">
    <property type="entry name" value="Gln_synth_cat_dom"/>
</dbReference>
<dbReference type="InterPro" id="IPR027303">
    <property type="entry name" value="Gln_synth_gly_rich_site"/>
</dbReference>
<dbReference type="InterPro" id="IPR004809">
    <property type="entry name" value="Gln_synth_I"/>
</dbReference>
<dbReference type="InterPro" id="IPR027302">
    <property type="entry name" value="Gln_synth_N_conserv_site"/>
</dbReference>
<dbReference type="NCBIfam" id="TIGR00653">
    <property type="entry name" value="GlnA"/>
    <property type="match status" value="1"/>
</dbReference>
<dbReference type="PANTHER" id="PTHR43785">
    <property type="entry name" value="GAMMA-GLUTAMYLPUTRESCINE SYNTHETASE"/>
    <property type="match status" value="1"/>
</dbReference>
<dbReference type="PANTHER" id="PTHR43785:SF12">
    <property type="entry name" value="TYPE-1 GLUTAMINE SYNTHETASE 2"/>
    <property type="match status" value="1"/>
</dbReference>
<dbReference type="Pfam" id="PF00120">
    <property type="entry name" value="Gln-synt_C"/>
    <property type="match status" value="1"/>
</dbReference>
<dbReference type="Pfam" id="PF03951">
    <property type="entry name" value="Gln-synt_N"/>
    <property type="match status" value="1"/>
</dbReference>
<dbReference type="SMART" id="SM01230">
    <property type="entry name" value="Gln-synt_C"/>
    <property type="match status" value="1"/>
</dbReference>
<dbReference type="SUPFAM" id="SSF54368">
    <property type="entry name" value="Glutamine synthetase, N-terminal domain"/>
    <property type="match status" value="1"/>
</dbReference>
<dbReference type="SUPFAM" id="SSF55931">
    <property type="entry name" value="Glutamine synthetase/guanido kinase"/>
    <property type="match status" value="1"/>
</dbReference>
<dbReference type="PROSITE" id="PS00180">
    <property type="entry name" value="GLNA_1"/>
    <property type="match status" value="1"/>
</dbReference>
<dbReference type="PROSITE" id="PS00181">
    <property type="entry name" value="GLNA_ATP"/>
    <property type="match status" value="1"/>
</dbReference>
<dbReference type="PROSITE" id="PS51986">
    <property type="entry name" value="GS_BETA_GRASP"/>
    <property type="match status" value="1"/>
</dbReference>
<dbReference type="PROSITE" id="PS51987">
    <property type="entry name" value="GS_CATALYTIC"/>
    <property type="match status" value="1"/>
</dbReference>